<evidence type="ECO:0000255" key="1">
    <source>
        <dbReference type="HAMAP-Rule" id="MF_01858"/>
    </source>
</evidence>
<proteinExistence type="inferred from homology"/>
<feature type="chain" id="PRO_0000366775" description="Ribosomal RNA large subunit methyltransferase K/L">
    <location>
        <begin position="1"/>
        <end position="725"/>
    </location>
</feature>
<feature type="domain" description="THUMP" evidence="1">
    <location>
        <begin position="45"/>
        <end position="156"/>
    </location>
</feature>
<sequence length="725" mass="81218">MSKHVFFVTCPKGVEYLLADELKEFGLNLVRNAPAGVWVEGELESGYRACLWSRLANRVILNVADVDARSADELYAGVVDLDWQAHIPAGGSFRVTFLGQNEAIRNTQFGAQKVKDGIVDSIRGAGAPRPSVAPKDPDVTVSARLNRGRLSLGIDLSGHSLHMRGYRTEKGIAPLKENLAAALLLRAGWPEIAANGGDFVDLMCGSGTLVVEAALMALDIAPGRKQERFGFEKWPGHQPELWLSLRQEAERRAHEGKQGRIPTFYGFDRDGRVIATAEKNILRAGLEGIVRVEARPISEFTRKNDWSDTGLVLTNPPYGERLSERKELAALYQSLGEVVARELIGWRLGVFTGAPEFGKSLGLRSFKQYKLFNGKLPAQLLLFEVQPENARTPRDPAAPGQIMPRIANAERADMLRNRLKKNLKTIGQWARKQNIGCYRLYDADMPEYALAIDIYEGRVHVQEYLAPKSVDEKAARERLAEAMAVIPEVLEVAPEDLVCKQRQRQTGTRQYEKQAATGEYFNVHEHGCALKVNLKDYLDTGLFLDHRPVRYWIQQHARGKRFLNLFCYTGAATVHAAVGGASRSLSLDMSKTYVGWAQDNLALNSADPRKHVVEQADCLAWLADRKTANQSFDLIFMDPPTFSNSARMAGVLDIQRDHADLVRQCMARLSSDGLLIFSNNFRKFRLDEALESEFEVKEVSASTLDKDFQRNPKIHRCWHIRHQNS</sequence>
<reference key="1">
    <citation type="journal article" date="2011" name="Appl. Environ. Microbiol.">
        <title>Genomic potential of Marinobacter aquaeolei, a biogeochemical 'opportunitroph'.</title>
        <authorList>
            <person name="Singer E."/>
            <person name="Webb E.A."/>
            <person name="Nelson W.C."/>
            <person name="Heidelberg J.F."/>
            <person name="Ivanova N."/>
            <person name="Pati A."/>
            <person name="Edwards K.J."/>
        </authorList>
    </citation>
    <scope>NUCLEOTIDE SEQUENCE [LARGE SCALE GENOMIC DNA]</scope>
    <source>
        <strain>ATCC 700491 / DSM 11845 / VT8</strain>
    </source>
</reference>
<dbReference type="EC" id="2.1.1.173" evidence="1"/>
<dbReference type="EC" id="2.1.1.264" evidence="1"/>
<dbReference type="EMBL" id="CP000514">
    <property type="protein sequence ID" value="ABM18131.1"/>
    <property type="molecule type" value="Genomic_DNA"/>
</dbReference>
<dbReference type="RefSeq" id="WP_011784549.1">
    <property type="nucleotide sequence ID" value="NC_008740.1"/>
</dbReference>
<dbReference type="SMR" id="A1TZG2"/>
<dbReference type="STRING" id="351348.Maqu_1039"/>
<dbReference type="KEGG" id="maq:Maqu_1039"/>
<dbReference type="eggNOG" id="COG0116">
    <property type="taxonomic scope" value="Bacteria"/>
</dbReference>
<dbReference type="eggNOG" id="COG1092">
    <property type="taxonomic scope" value="Bacteria"/>
</dbReference>
<dbReference type="HOGENOM" id="CLU_014042_2_0_6"/>
<dbReference type="OrthoDB" id="9809404at2"/>
<dbReference type="Proteomes" id="UP000000998">
    <property type="component" value="Chromosome"/>
</dbReference>
<dbReference type="GO" id="GO:0005737">
    <property type="term" value="C:cytoplasm"/>
    <property type="evidence" value="ECO:0007669"/>
    <property type="project" value="UniProtKB-SubCell"/>
</dbReference>
<dbReference type="GO" id="GO:0052915">
    <property type="term" value="F:23S rRNA (guanine(2445)-N(2))-methyltransferase activity"/>
    <property type="evidence" value="ECO:0007669"/>
    <property type="project" value="UniProtKB-UniRule"/>
</dbReference>
<dbReference type="GO" id="GO:0003723">
    <property type="term" value="F:RNA binding"/>
    <property type="evidence" value="ECO:0007669"/>
    <property type="project" value="UniProtKB-KW"/>
</dbReference>
<dbReference type="GO" id="GO:0070043">
    <property type="term" value="F:rRNA (guanine-N7-)-methyltransferase activity"/>
    <property type="evidence" value="ECO:0007669"/>
    <property type="project" value="UniProtKB-UniRule"/>
</dbReference>
<dbReference type="CDD" id="cd02440">
    <property type="entry name" value="AdoMet_MTases"/>
    <property type="match status" value="1"/>
</dbReference>
<dbReference type="CDD" id="cd11715">
    <property type="entry name" value="THUMP_AdoMetMT"/>
    <property type="match status" value="1"/>
</dbReference>
<dbReference type="Gene3D" id="3.30.2130.30">
    <property type="match status" value="1"/>
</dbReference>
<dbReference type="Gene3D" id="3.30.750.80">
    <property type="entry name" value="RNA methyltransferase domain (HRMD) like"/>
    <property type="match status" value="1"/>
</dbReference>
<dbReference type="Gene3D" id="3.40.50.150">
    <property type="entry name" value="Vaccinia Virus protein VP39"/>
    <property type="match status" value="2"/>
</dbReference>
<dbReference type="HAMAP" id="MF_01858">
    <property type="entry name" value="23SrRNA_methyltr_KL"/>
    <property type="match status" value="1"/>
</dbReference>
<dbReference type="InterPro" id="IPR017244">
    <property type="entry name" value="23SrRNA_methyltr_KL"/>
</dbReference>
<dbReference type="InterPro" id="IPR002052">
    <property type="entry name" value="DNA_methylase_N6_adenine_CS"/>
</dbReference>
<dbReference type="InterPro" id="IPR000241">
    <property type="entry name" value="RlmKL-like_Mtase"/>
</dbReference>
<dbReference type="InterPro" id="IPR054170">
    <property type="entry name" value="RlmL_1st"/>
</dbReference>
<dbReference type="InterPro" id="IPR019614">
    <property type="entry name" value="SAM-dep_methyl-trfase"/>
</dbReference>
<dbReference type="InterPro" id="IPR029063">
    <property type="entry name" value="SAM-dependent_MTases_sf"/>
</dbReference>
<dbReference type="InterPro" id="IPR004114">
    <property type="entry name" value="THUMP_dom"/>
</dbReference>
<dbReference type="NCBIfam" id="NF008748">
    <property type="entry name" value="PRK11783.1"/>
    <property type="match status" value="1"/>
</dbReference>
<dbReference type="PANTHER" id="PTHR47313">
    <property type="entry name" value="RIBOSOMAL RNA LARGE SUBUNIT METHYLTRANSFERASE K/L"/>
    <property type="match status" value="1"/>
</dbReference>
<dbReference type="PANTHER" id="PTHR47313:SF1">
    <property type="entry name" value="RIBOSOMAL RNA LARGE SUBUNIT METHYLTRANSFERASE K_L"/>
    <property type="match status" value="1"/>
</dbReference>
<dbReference type="Pfam" id="PF10672">
    <property type="entry name" value="Methyltrans_SAM"/>
    <property type="match status" value="1"/>
</dbReference>
<dbReference type="Pfam" id="PF22020">
    <property type="entry name" value="RlmL_1st"/>
    <property type="match status" value="1"/>
</dbReference>
<dbReference type="Pfam" id="PF02926">
    <property type="entry name" value="THUMP"/>
    <property type="match status" value="1"/>
</dbReference>
<dbReference type="Pfam" id="PF01170">
    <property type="entry name" value="UPF0020"/>
    <property type="match status" value="1"/>
</dbReference>
<dbReference type="PIRSF" id="PIRSF037618">
    <property type="entry name" value="RNA_Mtase_bacteria_prd"/>
    <property type="match status" value="1"/>
</dbReference>
<dbReference type="SMART" id="SM00981">
    <property type="entry name" value="THUMP"/>
    <property type="match status" value="1"/>
</dbReference>
<dbReference type="SUPFAM" id="SSF53335">
    <property type="entry name" value="S-adenosyl-L-methionine-dependent methyltransferases"/>
    <property type="match status" value="2"/>
</dbReference>
<dbReference type="PROSITE" id="PS51165">
    <property type="entry name" value="THUMP"/>
    <property type="match status" value="1"/>
</dbReference>
<protein>
    <recommendedName>
        <fullName evidence="1">Ribosomal RNA large subunit methyltransferase K/L</fullName>
    </recommendedName>
    <domain>
        <recommendedName>
            <fullName evidence="1">23S rRNA m2G2445 methyltransferase</fullName>
            <ecNumber evidence="1">2.1.1.173</ecNumber>
        </recommendedName>
        <alternativeName>
            <fullName evidence="1">rRNA (guanine-N(2)-)-methyltransferase RlmL</fullName>
        </alternativeName>
    </domain>
    <domain>
        <recommendedName>
            <fullName evidence="1">23S rRNA m7G2069 methyltransferase</fullName>
            <ecNumber evidence="1">2.1.1.264</ecNumber>
        </recommendedName>
        <alternativeName>
            <fullName evidence="1">rRNA (guanine-N(7)-)-methyltransferase RlmK</fullName>
        </alternativeName>
    </domain>
</protein>
<comment type="function">
    <text evidence="1">Specifically methylates the guanine in position 2445 (m2G2445) and the guanine in position 2069 (m7G2069) of 23S rRNA.</text>
</comment>
<comment type="catalytic activity">
    <reaction evidence="1">
        <text>guanosine(2445) in 23S rRNA + S-adenosyl-L-methionine = N(2)-methylguanosine(2445) in 23S rRNA + S-adenosyl-L-homocysteine + H(+)</text>
        <dbReference type="Rhea" id="RHEA:42740"/>
        <dbReference type="Rhea" id="RHEA-COMP:10215"/>
        <dbReference type="Rhea" id="RHEA-COMP:10216"/>
        <dbReference type="ChEBI" id="CHEBI:15378"/>
        <dbReference type="ChEBI" id="CHEBI:57856"/>
        <dbReference type="ChEBI" id="CHEBI:59789"/>
        <dbReference type="ChEBI" id="CHEBI:74269"/>
        <dbReference type="ChEBI" id="CHEBI:74481"/>
        <dbReference type="EC" id="2.1.1.173"/>
    </reaction>
</comment>
<comment type="catalytic activity">
    <reaction evidence="1">
        <text>guanosine(2069) in 23S rRNA + S-adenosyl-L-methionine = N(2)-methylguanosine(2069) in 23S rRNA + S-adenosyl-L-homocysteine + H(+)</text>
        <dbReference type="Rhea" id="RHEA:43772"/>
        <dbReference type="Rhea" id="RHEA-COMP:10688"/>
        <dbReference type="Rhea" id="RHEA-COMP:10689"/>
        <dbReference type="ChEBI" id="CHEBI:15378"/>
        <dbReference type="ChEBI" id="CHEBI:57856"/>
        <dbReference type="ChEBI" id="CHEBI:59789"/>
        <dbReference type="ChEBI" id="CHEBI:74269"/>
        <dbReference type="ChEBI" id="CHEBI:74481"/>
        <dbReference type="EC" id="2.1.1.264"/>
    </reaction>
</comment>
<comment type="subcellular location">
    <subcellularLocation>
        <location evidence="1">Cytoplasm</location>
    </subcellularLocation>
</comment>
<comment type="similarity">
    <text evidence="1">Belongs to the methyltransferase superfamily. RlmKL family.</text>
</comment>
<organism>
    <name type="scientific">Marinobacter nauticus (strain ATCC 700491 / DSM 11845 / VT8)</name>
    <name type="common">Marinobacter aquaeolei</name>
    <dbReference type="NCBI Taxonomy" id="351348"/>
    <lineage>
        <taxon>Bacteria</taxon>
        <taxon>Pseudomonadati</taxon>
        <taxon>Pseudomonadota</taxon>
        <taxon>Gammaproteobacteria</taxon>
        <taxon>Pseudomonadales</taxon>
        <taxon>Marinobacteraceae</taxon>
        <taxon>Marinobacter</taxon>
    </lineage>
</organism>
<name>RLMKL_MARN8</name>
<keyword id="KW-0963">Cytoplasm</keyword>
<keyword id="KW-0489">Methyltransferase</keyword>
<keyword id="KW-0694">RNA-binding</keyword>
<keyword id="KW-0698">rRNA processing</keyword>
<keyword id="KW-0949">S-adenosyl-L-methionine</keyword>
<keyword id="KW-0808">Transferase</keyword>
<accession>A1TZG2</accession>
<gene>
    <name evidence="1" type="primary">rlmL</name>
    <name type="ordered locus">Maqu_1039</name>
</gene>